<organism>
    <name type="scientific">Aliarcobacter butzleri (strain RM4018)</name>
    <name type="common">Arcobacter butzleri</name>
    <dbReference type="NCBI Taxonomy" id="367737"/>
    <lineage>
        <taxon>Bacteria</taxon>
        <taxon>Pseudomonadati</taxon>
        <taxon>Campylobacterota</taxon>
        <taxon>Epsilonproteobacteria</taxon>
        <taxon>Campylobacterales</taxon>
        <taxon>Arcobacteraceae</taxon>
        <taxon>Aliarcobacter</taxon>
    </lineage>
</organism>
<reference key="1">
    <citation type="journal article" date="2007" name="PLoS ONE">
        <title>The complete genome sequence and analysis of the Epsilonproteobacterium Arcobacter butzleri.</title>
        <authorList>
            <person name="Miller W.G."/>
            <person name="Parker C.T."/>
            <person name="Rubenfield M."/>
            <person name="Mendz G.L."/>
            <person name="Woesten M.M.S.M."/>
            <person name="Ussery D.W."/>
            <person name="Stolz J.F."/>
            <person name="Binnewies T.T."/>
            <person name="Hallin P.F."/>
            <person name="Wang G."/>
            <person name="Malek J.A."/>
            <person name="Rogosin A."/>
            <person name="Stanker L.H."/>
            <person name="Mandrell R.E."/>
        </authorList>
    </citation>
    <scope>NUCLEOTIDE SEQUENCE [LARGE SCALE GENOMIC DNA]</scope>
    <source>
        <strain>RM4018</strain>
    </source>
</reference>
<evidence type="ECO:0000255" key="1">
    <source>
        <dbReference type="HAMAP-Rule" id="MF_00500"/>
    </source>
</evidence>
<evidence type="ECO:0000305" key="2"/>
<accession>A8EQZ3</accession>
<comment type="function">
    <text evidence="1">Binds directly to 16S ribosomal RNA.</text>
</comment>
<comment type="similarity">
    <text evidence="1">Belongs to the bacterial ribosomal protein bS20 family.</text>
</comment>
<name>RS20_ALIB4</name>
<gene>
    <name evidence="1" type="primary">rpsT</name>
    <name type="ordered locus">Abu_0082</name>
</gene>
<keyword id="KW-1185">Reference proteome</keyword>
<keyword id="KW-0687">Ribonucleoprotein</keyword>
<keyword id="KW-0689">Ribosomal protein</keyword>
<keyword id="KW-0694">RNA-binding</keyword>
<keyword id="KW-0699">rRNA-binding</keyword>
<feature type="chain" id="PRO_1000060488" description="Small ribosomal subunit protein bS20">
    <location>
        <begin position="1"/>
        <end position="86"/>
    </location>
</feature>
<dbReference type="EMBL" id="CP000361">
    <property type="protein sequence ID" value="ABV66367.1"/>
    <property type="molecule type" value="Genomic_DNA"/>
</dbReference>
<dbReference type="RefSeq" id="WP_004510127.1">
    <property type="nucleotide sequence ID" value="NC_009850.1"/>
</dbReference>
<dbReference type="SMR" id="A8EQZ3"/>
<dbReference type="STRING" id="367737.Abu_0082"/>
<dbReference type="GeneID" id="24304086"/>
<dbReference type="KEGG" id="abu:Abu_0082"/>
<dbReference type="eggNOG" id="COG0268">
    <property type="taxonomic scope" value="Bacteria"/>
</dbReference>
<dbReference type="HOGENOM" id="CLU_160655_3_0_7"/>
<dbReference type="Proteomes" id="UP000001136">
    <property type="component" value="Chromosome"/>
</dbReference>
<dbReference type="GO" id="GO:0005829">
    <property type="term" value="C:cytosol"/>
    <property type="evidence" value="ECO:0007669"/>
    <property type="project" value="TreeGrafter"/>
</dbReference>
<dbReference type="GO" id="GO:0015935">
    <property type="term" value="C:small ribosomal subunit"/>
    <property type="evidence" value="ECO:0007669"/>
    <property type="project" value="TreeGrafter"/>
</dbReference>
<dbReference type="GO" id="GO:0070181">
    <property type="term" value="F:small ribosomal subunit rRNA binding"/>
    <property type="evidence" value="ECO:0007669"/>
    <property type="project" value="TreeGrafter"/>
</dbReference>
<dbReference type="GO" id="GO:0003735">
    <property type="term" value="F:structural constituent of ribosome"/>
    <property type="evidence" value="ECO:0007669"/>
    <property type="project" value="InterPro"/>
</dbReference>
<dbReference type="GO" id="GO:0006412">
    <property type="term" value="P:translation"/>
    <property type="evidence" value="ECO:0007669"/>
    <property type="project" value="UniProtKB-UniRule"/>
</dbReference>
<dbReference type="Gene3D" id="1.20.58.110">
    <property type="entry name" value="Ribosomal protein S20"/>
    <property type="match status" value="1"/>
</dbReference>
<dbReference type="HAMAP" id="MF_00500">
    <property type="entry name" value="Ribosomal_bS20"/>
    <property type="match status" value="1"/>
</dbReference>
<dbReference type="InterPro" id="IPR002583">
    <property type="entry name" value="Ribosomal_bS20"/>
</dbReference>
<dbReference type="InterPro" id="IPR036510">
    <property type="entry name" value="Ribosomal_bS20_sf"/>
</dbReference>
<dbReference type="NCBIfam" id="TIGR00029">
    <property type="entry name" value="S20"/>
    <property type="match status" value="1"/>
</dbReference>
<dbReference type="PANTHER" id="PTHR33398">
    <property type="entry name" value="30S RIBOSOMAL PROTEIN S20"/>
    <property type="match status" value="1"/>
</dbReference>
<dbReference type="PANTHER" id="PTHR33398:SF1">
    <property type="entry name" value="SMALL RIBOSOMAL SUBUNIT PROTEIN BS20C"/>
    <property type="match status" value="1"/>
</dbReference>
<dbReference type="Pfam" id="PF01649">
    <property type="entry name" value="Ribosomal_S20p"/>
    <property type="match status" value="1"/>
</dbReference>
<dbReference type="SUPFAM" id="SSF46992">
    <property type="entry name" value="Ribosomal protein S20"/>
    <property type="match status" value="1"/>
</dbReference>
<sequence length="86" mass="9772">MANHKSCEKRARQTVVKTERNRFYKTRIKNVTKSVLSAVELADKEKAVEAMKAANQYFHHCVSKGILKKGTASRKVSRLQLKVNAI</sequence>
<proteinExistence type="inferred from homology"/>
<protein>
    <recommendedName>
        <fullName evidence="1">Small ribosomal subunit protein bS20</fullName>
    </recommendedName>
    <alternativeName>
        <fullName evidence="2">30S ribosomal protein S20</fullName>
    </alternativeName>
</protein>